<evidence type="ECO:0000255" key="1">
    <source>
        <dbReference type="HAMAP-Rule" id="MF_00110"/>
    </source>
</evidence>
<name>AROB_CHLTE</name>
<proteinExistence type="inferred from homology"/>
<gene>
    <name evidence="1" type="primary">aroB</name>
    <name type="ordered locus">CT1406</name>
</gene>
<feature type="chain" id="PRO_0000140727" description="3-dehydroquinate synthase">
    <location>
        <begin position="1"/>
        <end position="368"/>
    </location>
</feature>
<feature type="binding site" evidence="1">
    <location>
        <begin position="99"/>
        <end position="103"/>
    </location>
    <ligand>
        <name>NAD(+)</name>
        <dbReference type="ChEBI" id="CHEBI:57540"/>
    </ligand>
</feature>
<feature type="binding site" evidence="1">
    <location>
        <begin position="123"/>
        <end position="124"/>
    </location>
    <ligand>
        <name>NAD(+)</name>
        <dbReference type="ChEBI" id="CHEBI:57540"/>
    </ligand>
</feature>
<feature type="binding site" evidence="1">
    <location>
        <position position="136"/>
    </location>
    <ligand>
        <name>NAD(+)</name>
        <dbReference type="ChEBI" id="CHEBI:57540"/>
    </ligand>
</feature>
<feature type="binding site" evidence="1">
    <location>
        <position position="145"/>
    </location>
    <ligand>
        <name>NAD(+)</name>
        <dbReference type="ChEBI" id="CHEBI:57540"/>
    </ligand>
</feature>
<feature type="binding site" evidence="1">
    <location>
        <position position="178"/>
    </location>
    <ligand>
        <name>Zn(2+)</name>
        <dbReference type="ChEBI" id="CHEBI:29105"/>
    </ligand>
</feature>
<feature type="binding site" evidence="1">
    <location>
        <position position="242"/>
    </location>
    <ligand>
        <name>Zn(2+)</name>
        <dbReference type="ChEBI" id="CHEBI:29105"/>
    </ligand>
</feature>
<feature type="binding site" evidence="1">
    <location>
        <position position="259"/>
    </location>
    <ligand>
        <name>Zn(2+)</name>
        <dbReference type="ChEBI" id="CHEBI:29105"/>
    </ligand>
</feature>
<reference key="1">
    <citation type="journal article" date="2002" name="Proc. Natl. Acad. Sci. U.S.A.">
        <title>The complete genome sequence of Chlorobium tepidum TLS, a photosynthetic, anaerobic, green-sulfur bacterium.</title>
        <authorList>
            <person name="Eisen J.A."/>
            <person name="Nelson K.E."/>
            <person name="Paulsen I.T."/>
            <person name="Heidelberg J.F."/>
            <person name="Wu M."/>
            <person name="Dodson R.J."/>
            <person name="DeBoy R.T."/>
            <person name="Gwinn M.L."/>
            <person name="Nelson W.C."/>
            <person name="Haft D.H."/>
            <person name="Hickey E.K."/>
            <person name="Peterson J.D."/>
            <person name="Durkin A.S."/>
            <person name="Kolonay J.F."/>
            <person name="Yang F."/>
            <person name="Holt I.E."/>
            <person name="Umayam L.A."/>
            <person name="Mason T.M."/>
            <person name="Brenner M."/>
            <person name="Shea T.P."/>
            <person name="Parksey D.S."/>
            <person name="Nierman W.C."/>
            <person name="Feldblyum T.V."/>
            <person name="Hansen C.L."/>
            <person name="Craven M.B."/>
            <person name="Radune D."/>
            <person name="Vamathevan J.J."/>
            <person name="Khouri H.M."/>
            <person name="White O."/>
            <person name="Gruber T.M."/>
            <person name="Ketchum K.A."/>
            <person name="Venter J.C."/>
            <person name="Tettelin H."/>
            <person name="Bryant D.A."/>
            <person name="Fraser C.M."/>
        </authorList>
    </citation>
    <scope>NUCLEOTIDE SEQUENCE [LARGE SCALE GENOMIC DNA]</scope>
    <source>
        <strain>ATCC 49652 / DSM 12025 / NBRC 103806 / TLS</strain>
    </source>
</reference>
<sequence length="368" mass="41156">MQTPSSHIIVRTPVIDSVGELYATRGLGKKTVLLFDENTRRLFGDAIIESMQRQGFRTIELVVPARETSKSVSTAWKLYGQMIEADVDRSWNLLCAGGGVVGDLGGYIAASYYRGIPVVQLPTTLLAMTDSSIGGKVAINHPLGKNLIGFFHMPELVLIDPAYLRTLPSREIYGGMSEVVKYGFIADREFFDLLTKHWDEVVRLEEPWLSKAVSRSAFIKANVVEKDFRETSGLRATLNFGHTFAHGLEKMAGYRNLRHGEAVTIGMVCALFLSHRPGFLAEADLREGLALLARFRFPRGLVNKRFLSLDRDELVESMLSDKKKIDKQLRFVLLDRIGHAFLHDKDITKTDVLQAIDDAMGWFSSAGF</sequence>
<keyword id="KW-0028">Amino-acid biosynthesis</keyword>
<keyword id="KW-0057">Aromatic amino acid biosynthesis</keyword>
<keyword id="KW-0170">Cobalt</keyword>
<keyword id="KW-0963">Cytoplasm</keyword>
<keyword id="KW-0456">Lyase</keyword>
<keyword id="KW-0479">Metal-binding</keyword>
<keyword id="KW-0520">NAD</keyword>
<keyword id="KW-0547">Nucleotide-binding</keyword>
<keyword id="KW-1185">Reference proteome</keyword>
<keyword id="KW-0862">Zinc</keyword>
<protein>
    <recommendedName>
        <fullName evidence="1">3-dehydroquinate synthase</fullName>
        <shortName evidence="1">DHQS</shortName>
        <ecNumber evidence="1">4.2.3.4</ecNumber>
    </recommendedName>
</protein>
<dbReference type="EC" id="4.2.3.4" evidence="1"/>
<dbReference type="EMBL" id="AE006470">
    <property type="protein sequence ID" value="AAM72634.1"/>
    <property type="molecule type" value="Genomic_DNA"/>
</dbReference>
<dbReference type="RefSeq" id="NP_662292.1">
    <property type="nucleotide sequence ID" value="NC_002932.3"/>
</dbReference>
<dbReference type="RefSeq" id="WP_010933073.1">
    <property type="nucleotide sequence ID" value="NC_002932.3"/>
</dbReference>
<dbReference type="SMR" id="Q8KCK9"/>
<dbReference type="STRING" id="194439.CT1406"/>
<dbReference type="EnsemblBacteria" id="AAM72634">
    <property type="protein sequence ID" value="AAM72634"/>
    <property type="gene ID" value="CT1406"/>
</dbReference>
<dbReference type="KEGG" id="cte:CT1406"/>
<dbReference type="PATRIC" id="fig|194439.7.peg.1275"/>
<dbReference type="eggNOG" id="COG0337">
    <property type="taxonomic scope" value="Bacteria"/>
</dbReference>
<dbReference type="HOGENOM" id="CLU_001201_0_2_10"/>
<dbReference type="OrthoDB" id="9806583at2"/>
<dbReference type="UniPathway" id="UPA00053">
    <property type="reaction ID" value="UER00085"/>
</dbReference>
<dbReference type="Proteomes" id="UP000001007">
    <property type="component" value="Chromosome"/>
</dbReference>
<dbReference type="GO" id="GO:0005737">
    <property type="term" value="C:cytoplasm"/>
    <property type="evidence" value="ECO:0007669"/>
    <property type="project" value="UniProtKB-SubCell"/>
</dbReference>
<dbReference type="GO" id="GO:0003856">
    <property type="term" value="F:3-dehydroquinate synthase activity"/>
    <property type="evidence" value="ECO:0007669"/>
    <property type="project" value="UniProtKB-UniRule"/>
</dbReference>
<dbReference type="GO" id="GO:0046872">
    <property type="term" value="F:metal ion binding"/>
    <property type="evidence" value="ECO:0007669"/>
    <property type="project" value="UniProtKB-KW"/>
</dbReference>
<dbReference type="GO" id="GO:0000166">
    <property type="term" value="F:nucleotide binding"/>
    <property type="evidence" value="ECO:0007669"/>
    <property type="project" value="UniProtKB-KW"/>
</dbReference>
<dbReference type="GO" id="GO:0008652">
    <property type="term" value="P:amino acid biosynthetic process"/>
    <property type="evidence" value="ECO:0007669"/>
    <property type="project" value="UniProtKB-KW"/>
</dbReference>
<dbReference type="GO" id="GO:0009073">
    <property type="term" value="P:aromatic amino acid family biosynthetic process"/>
    <property type="evidence" value="ECO:0007669"/>
    <property type="project" value="UniProtKB-KW"/>
</dbReference>
<dbReference type="GO" id="GO:0009423">
    <property type="term" value="P:chorismate biosynthetic process"/>
    <property type="evidence" value="ECO:0007669"/>
    <property type="project" value="UniProtKB-UniRule"/>
</dbReference>
<dbReference type="CDD" id="cd08195">
    <property type="entry name" value="DHQS"/>
    <property type="match status" value="1"/>
</dbReference>
<dbReference type="FunFam" id="3.40.50.1970:FF:000007">
    <property type="entry name" value="Pentafunctional AROM polypeptide"/>
    <property type="match status" value="1"/>
</dbReference>
<dbReference type="Gene3D" id="3.40.50.1970">
    <property type="match status" value="1"/>
</dbReference>
<dbReference type="Gene3D" id="1.20.1090.10">
    <property type="entry name" value="Dehydroquinate synthase-like - alpha domain"/>
    <property type="match status" value="1"/>
</dbReference>
<dbReference type="HAMAP" id="MF_00110">
    <property type="entry name" value="DHQ_synthase"/>
    <property type="match status" value="1"/>
</dbReference>
<dbReference type="InterPro" id="IPR050071">
    <property type="entry name" value="Dehydroquinate_synthase"/>
</dbReference>
<dbReference type="InterPro" id="IPR016037">
    <property type="entry name" value="DHQ_synth_AroB"/>
</dbReference>
<dbReference type="InterPro" id="IPR030963">
    <property type="entry name" value="DHQ_synth_fam"/>
</dbReference>
<dbReference type="InterPro" id="IPR030960">
    <property type="entry name" value="DHQS/DOIS_N"/>
</dbReference>
<dbReference type="InterPro" id="IPR056179">
    <property type="entry name" value="DHQS_C"/>
</dbReference>
<dbReference type="NCBIfam" id="TIGR01357">
    <property type="entry name" value="aroB"/>
    <property type="match status" value="1"/>
</dbReference>
<dbReference type="PANTHER" id="PTHR43622">
    <property type="entry name" value="3-DEHYDROQUINATE SYNTHASE"/>
    <property type="match status" value="1"/>
</dbReference>
<dbReference type="PANTHER" id="PTHR43622:SF7">
    <property type="entry name" value="3-DEHYDROQUINATE SYNTHASE, CHLOROPLASTIC"/>
    <property type="match status" value="1"/>
</dbReference>
<dbReference type="Pfam" id="PF01761">
    <property type="entry name" value="DHQ_synthase"/>
    <property type="match status" value="1"/>
</dbReference>
<dbReference type="Pfam" id="PF24621">
    <property type="entry name" value="DHQS_C"/>
    <property type="match status" value="1"/>
</dbReference>
<dbReference type="PIRSF" id="PIRSF001455">
    <property type="entry name" value="DHQ_synth"/>
    <property type="match status" value="1"/>
</dbReference>
<dbReference type="SUPFAM" id="SSF56796">
    <property type="entry name" value="Dehydroquinate synthase-like"/>
    <property type="match status" value="1"/>
</dbReference>
<accession>Q8KCK9</accession>
<organism>
    <name type="scientific">Chlorobaculum tepidum (strain ATCC 49652 / DSM 12025 / NBRC 103806 / TLS)</name>
    <name type="common">Chlorobium tepidum</name>
    <dbReference type="NCBI Taxonomy" id="194439"/>
    <lineage>
        <taxon>Bacteria</taxon>
        <taxon>Pseudomonadati</taxon>
        <taxon>Chlorobiota</taxon>
        <taxon>Chlorobiia</taxon>
        <taxon>Chlorobiales</taxon>
        <taxon>Chlorobiaceae</taxon>
        <taxon>Chlorobaculum</taxon>
    </lineage>
</organism>
<comment type="function">
    <text evidence="1">Catalyzes the conversion of 3-deoxy-D-arabino-heptulosonate 7-phosphate (DAHP) to dehydroquinate (DHQ).</text>
</comment>
<comment type="catalytic activity">
    <reaction evidence="1">
        <text>7-phospho-2-dehydro-3-deoxy-D-arabino-heptonate = 3-dehydroquinate + phosphate</text>
        <dbReference type="Rhea" id="RHEA:21968"/>
        <dbReference type="ChEBI" id="CHEBI:32364"/>
        <dbReference type="ChEBI" id="CHEBI:43474"/>
        <dbReference type="ChEBI" id="CHEBI:58394"/>
        <dbReference type="EC" id="4.2.3.4"/>
    </reaction>
</comment>
<comment type="cofactor">
    <cofactor evidence="1">
        <name>NAD(+)</name>
        <dbReference type="ChEBI" id="CHEBI:57540"/>
    </cofactor>
</comment>
<comment type="cofactor">
    <cofactor evidence="1">
        <name>Co(2+)</name>
        <dbReference type="ChEBI" id="CHEBI:48828"/>
    </cofactor>
    <cofactor evidence="1">
        <name>Zn(2+)</name>
        <dbReference type="ChEBI" id="CHEBI:29105"/>
    </cofactor>
    <text evidence="1">Binds 1 divalent metal cation per subunit. Can use either Co(2+) or Zn(2+).</text>
</comment>
<comment type="pathway">
    <text evidence="1">Metabolic intermediate biosynthesis; chorismate biosynthesis; chorismate from D-erythrose 4-phosphate and phosphoenolpyruvate: step 2/7.</text>
</comment>
<comment type="subcellular location">
    <subcellularLocation>
        <location evidence="1">Cytoplasm</location>
    </subcellularLocation>
</comment>
<comment type="similarity">
    <text evidence="1">Belongs to the sugar phosphate cyclases superfamily. Dehydroquinate synthase family.</text>
</comment>